<reference key="1">
    <citation type="journal article" date="2009" name="Science">
        <title>The genome sequence of taurine cattle: a window to ruminant biology and evolution.</title>
        <authorList>
            <consortium name="The bovine genome sequencing and analysis consortium"/>
        </authorList>
    </citation>
    <scope>NUCLEOTIDE SEQUENCE [LARGE SCALE GENOMIC DNA]</scope>
    <source>
        <strain>Hereford</strain>
    </source>
</reference>
<reference key="2">
    <citation type="submission" date="2005-10" db="EMBL/GenBank/DDBJ databases">
        <authorList>
            <consortium name="NIH - Mammalian Gene Collection (MGC) project"/>
        </authorList>
    </citation>
    <scope>NUCLEOTIDE SEQUENCE [LARGE SCALE MRNA]</scope>
    <source>
        <strain>Crossbred X Angus</strain>
        <tissue>Liver</tissue>
    </source>
</reference>
<evidence type="ECO:0000250" key="1">
    <source>
        <dbReference type="UniProtKB" id="P09234"/>
    </source>
</evidence>
<evidence type="ECO:0000255" key="2">
    <source>
        <dbReference type="HAMAP-Rule" id="MF_03153"/>
    </source>
</evidence>
<evidence type="ECO:0000256" key="3">
    <source>
        <dbReference type="SAM" id="MobiDB-lite"/>
    </source>
</evidence>
<evidence type="ECO:0000305" key="4"/>
<proteinExistence type="evidence at transcript level"/>
<accession>Q32PA0</accession>
<accession>F1MM98</accession>
<sequence length="159" mass="17394">MPKFYCDYCDTYLTHDSPSVRKTHCSGRKHKENVKDYYQKWMEEQAQSLIDKTTAAFQQGKIPPTPFSAPPPAGAMIPPPPSLPGPPRPGMMPAPHMGGPPMMPMMGPPPPGMMPVGPAPGMRPPMGGHMPMMPGPPMMRPPARPMMVPTRPGMTRPDR</sequence>
<organism>
    <name type="scientific">Bos taurus</name>
    <name type="common">Bovine</name>
    <dbReference type="NCBI Taxonomy" id="9913"/>
    <lineage>
        <taxon>Eukaryota</taxon>
        <taxon>Metazoa</taxon>
        <taxon>Chordata</taxon>
        <taxon>Craniata</taxon>
        <taxon>Vertebrata</taxon>
        <taxon>Euteleostomi</taxon>
        <taxon>Mammalia</taxon>
        <taxon>Eutheria</taxon>
        <taxon>Laurasiatheria</taxon>
        <taxon>Artiodactyla</taxon>
        <taxon>Ruminantia</taxon>
        <taxon>Pecora</taxon>
        <taxon>Bovidae</taxon>
        <taxon>Bovinae</taxon>
        <taxon>Bos</taxon>
    </lineage>
</organism>
<dbReference type="EMBL" id="AAFC03038069">
    <property type="status" value="NOT_ANNOTATED_CDS"/>
    <property type="molecule type" value="Genomic_DNA"/>
</dbReference>
<dbReference type="EMBL" id="BC108201">
    <property type="protein sequence ID" value="AAI08202.1"/>
    <property type="molecule type" value="mRNA"/>
</dbReference>
<dbReference type="RefSeq" id="NP_001069802.1">
    <property type="nucleotide sequence ID" value="NM_001076334.2"/>
</dbReference>
<dbReference type="SMR" id="Q32PA0"/>
<dbReference type="FunCoup" id="Q32PA0">
    <property type="interactions" value="1663"/>
</dbReference>
<dbReference type="PaxDb" id="9913-ENSBTAP00000034056"/>
<dbReference type="GeneID" id="614553"/>
<dbReference type="KEGG" id="bta:614553"/>
<dbReference type="CTD" id="6631"/>
<dbReference type="VEuPathDB" id="HostDB:ENSBTAG00000024549"/>
<dbReference type="eggNOG" id="KOG3454">
    <property type="taxonomic scope" value="Eukaryota"/>
</dbReference>
<dbReference type="HOGENOM" id="CLU_079697_3_0_1"/>
<dbReference type="InParanoid" id="Q32PA0"/>
<dbReference type="OMA" id="QMRPPLM"/>
<dbReference type="OrthoDB" id="76567at2759"/>
<dbReference type="TreeFam" id="TF313578"/>
<dbReference type="Reactome" id="R-BTA-72163">
    <property type="pathway name" value="mRNA Splicing - Major Pathway"/>
</dbReference>
<dbReference type="Proteomes" id="UP000009136">
    <property type="component" value="Chromosome 23"/>
</dbReference>
<dbReference type="Bgee" id="ENSBTAG00000024549">
    <property type="expression patterns" value="Expressed in oocyte and 107 other cell types or tissues"/>
</dbReference>
<dbReference type="GO" id="GO:0000243">
    <property type="term" value="C:commitment complex"/>
    <property type="evidence" value="ECO:0007669"/>
    <property type="project" value="UniProtKB-UniRule"/>
</dbReference>
<dbReference type="GO" id="GO:0005685">
    <property type="term" value="C:U1 snRNP"/>
    <property type="evidence" value="ECO:0000250"/>
    <property type="project" value="UniProtKB"/>
</dbReference>
<dbReference type="GO" id="GO:0071004">
    <property type="term" value="C:U2-type prespliceosome"/>
    <property type="evidence" value="ECO:0007669"/>
    <property type="project" value="UniProtKB-UniRule"/>
</dbReference>
<dbReference type="GO" id="GO:0003729">
    <property type="term" value="F:mRNA binding"/>
    <property type="evidence" value="ECO:0007669"/>
    <property type="project" value="UniProtKB-UniRule"/>
</dbReference>
<dbReference type="GO" id="GO:0030627">
    <property type="term" value="F:pre-mRNA 5'-splice site binding"/>
    <property type="evidence" value="ECO:0000318"/>
    <property type="project" value="GO_Central"/>
</dbReference>
<dbReference type="GO" id="GO:0030619">
    <property type="term" value="F:U1 snRNA binding"/>
    <property type="evidence" value="ECO:0007669"/>
    <property type="project" value="UniProtKB-UniRule"/>
</dbReference>
<dbReference type="GO" id="GO:0008270">
    <property type="term" value="F:zinc ion binding"/>
    <property type="evidence" value="ECO:0007669"/>
    <property type="project" value="UniProtKB-UniRule"/>
</dbReference>
<dbReference type="GO" id="GO:0000395">
    <property type="term" value="P:mRNA 5'-splice site recognition"/>
    <property type="evidence" value="ECO:0000318"/>
    <property type="project" value="GO_Central"/>
</dbReference>
<dbReference type="GO" id="GO:0000387">
    <property type="term" value="P:spliceosomal snRNP assembly"/>
    <property type="evidence" value="ECO:0007669"/>
    <property type="project" value="UniProtKB-UniRule"/>
</dbReference>
<dbReference type="FunFam" id="3.30.160.60:FF:000059">
    <property type="entry name" value="U1 small nuclear ribonucleoprotein C"/>
    <property type="match status" value="1"/>
</dbReference>
<dbReference type="Gene3D" id="3.30.160.60">
    <property type="entry name" value="Classic Zinc Finger"/>
    <property type="match status" value="1"/>
</dbReference>
<dbReference type="HAMAP" id="MF_03153">
    <property type="entry name" value="U1_C"/>
    <property type="match status" value="1"/>
</dbReference>
<dbReference type="InterPro" id="IPR000690">
    <property type="entry name" value="Matrin/U1-C_Znf_C2H2"/>
</dbReference>
<dbReference type="InterPro" id="IPR003604">
    <property type="entry name" value="Matrin/U1-like-C_Znf_C2H2"/>
</dbReference>
<dbReference type="InterPro" id="IPR013085">
    <property type="entry name" value="U1-CZ_Znf_C2H2"/>
</dbReference>
<dbReference type="InterPro" id="IPR017340">
    <property type="entry name" value="U1_snRNP-C"/>
</dbReference>
<dbReference type="InterPro" id="IPR036236">
    <property type="entry name" value="Znf_C2H2_sf"/>
</dbReference>
<dbReference type="PANTHER" id="PTHR31148">
    <property type="entry name" value="U1 SMALL NUCLEAR RIBONUCLEOPROTEIN C"/>
    <property type="match status" value="1"/>
</dbReference>
<dbReference type="PANTHER" id="PTHR31148:SF1">
    <property type="entry name" value="U1 SMALL NUCLEAR RIBONUCLEOPROTEIN C"/>
    <property type="match status" value="1"/>
</dbReference>
<dbReference type="Pfam" id="PF06220">
    <property type="entry name" value="zf-U1"/>
    <property type="match status" value="1"/>
</dbReference>
<dbReference type="PIRSF" id="PIRSF037969">
    <property type="entry name" value="U1_snRNP-C"/>
    <property type="match status" value="1"/>
</dbReference>
<dbReference type="SMART" id="SM00451">
    <property type="entry name" value="ZnF_U1"/>
    <property type="match status" value="1"/>
</dbReference>
<dbReference type="SUPFAM" id="SSF57667">
    <property type="entry name" value="beta-beta-alpha zinc fingers"/>
    <property type="match status" value="1"/>
</dbReference>
<dbReference type="PROSITE" id="PS50171">
    <property type="entry name" value="ZF_MATRIN"/>
    <property type="match status" value="1"/>
</dbReference>
<keyword id="KW-0007">Acetylation</keyword>
<keyword id="KW-0479">Metal-binding</keyword>
<keyword id="KW-0539">Nucleus</keyword>
<keyword id="KW-0597">Phosphoprotein</keyword>
<keyword id="KW-1185">Reference proteome</keyword>
<keyword id="KW-0687">Ribonucleoprotein</keyword>
<keyword id="KW-0694">RNA-binding</keyword>
<keyword id="KW-0862">Zinc</keyword>
<keyword id="KW-0863">Zinc-finger</keyword>
<protein>
    <recommendedName>
        <fullName evidence="2">U1 small nuclear ribonucleoprotein C</fullName>
        <shortName evidence="2">U1 snRNP C</shortName>
        <shortName evidence="2">U1-C</shortName>
        <shortName evidence="2">U1C</shortName>
    </recommendedName>
</protein>
<comment type="function">
    <text evidence="2">Component of the spliceosomal U1 snRNP, which is essential for recognition of the pre-mRNA 5' splice-site and the subsequent assembly of the spliceosome. SNRPC/U1-C is directly involved in initial 5' splice-site recognition for both constitutive and regulated alternative splicing. The interaction with the 5' splice-site seems to precede base-pairing between the pre-mRNA and the U1 snRNA. Stimulates commitment or early (E) complex formation by stabilizing the base pairing of the 5' end of the U1 snRNA and the 5' splice-site region.</text>
</comment>
<comment type="subunit">
    <text evidence="1 2">Component of the U1 snRNP. The U1 snRNP is composed of the U1 snRNA and the 7 core Sm proteins SNRPB, SNRPD1, SNRPD2, SNRPD3, SNRPE, SNRPF and SNRPG that assemble in a heptameric protein ring on the Sm site of the small nuclear RNA to form the core snRNP, and at least 3 U1 snRNP-specific proteins SNRNP70/U1-70K, SNRPA/U1-A and SNRPC/U1-C. SNRPC/U1-C interacts with U1 snRNA and the 5' splice-site region of the pre-mRNA (By similarity). Interacts (via N-terminus) with TIA1 (via C-terminus); thereby promoting spliceosomal U1 snRNP recruitment to 5' splice sites (By similarity).</text>
</comment>
<comment type="subcellular location">
    <subcellularLocation>
        <location evidence="2">Nucleus</location>
    </subcellularLocation>
</comment>
<comment type="similarity">
    <text evidence="2">Belongs to the U1 small nuclear ribonucleoprotein C family.</text>
</comment>
<feature type="chain" id="PRO_0000328519" description="U1 small nuclear ribonucleoprotein C">
    <location>
        <begin position="1"/>
        <end position="159"/>
    </location>
</feature>
<feature type="zinc finger region" description="Matrin-type" evidence="2">
    <location>
        <begin position="4"/>
        <end position="36"/>
    </location>
</feature>
<feature type="region of interest" description="Disordered" evidence="3">
    <location>
        <begin position="62"/>
        <end position="96"/>
    </location>
</feature>
<feature type="region of interest" description="Disordered" evidence="3">
    <location>
        <begin position="140"/>
        <end position="159"/>
    </location>
</feature>
<feature type="compositionally biased region" description="Pro residues" evidence="3">
    <location>
        <begin position="63"/>
        <end position="92"/>
    </location>
</feature>
<feature type="modified residue" description="Phosphotyrosine" evidence="1">
    <location>
        <position position="8"/>
    </location>
</feature>
<feature type="modified residue" description="Phosphoserine" evidence="1">
    <location>
        <position position="17"/>
    </location>
</feature>
<feature type="modified residue" description="N6-acetyllysine" evidence="1">
    <location>
        <position position="52"/>
    </location>
</feature>
<feature type="sequence conflict" description="In Ref. 2; AAI08202." evidence="4" ref="2">
    <original>F</original>
    <variation>L</variation>
    <location>
        <position position="4"/>
    </location>
</feature>
<gene>
    <name evidence="2" type="primary">SNRPC</name>
</gene>
<name>RU1C_BOVIN</name>